<protein>
    <recommendedName>
        <fullName>Auxin response factor 11</fullName>
    </recommendedName>
    <alternativeName>
        <fullName>OsARF5</fullName>
    </alternativeName>
    <alternativeName>
        <fullName>OsMP</fullName>
    </alternativeName>
    <alternativeName>
        <fullName>Protein MONOPTEROS-like</fullName>
    </alternativeName>
</protein>
<name>ARFK_ORYSI</name>
<evidence type="ECO:0000250" key="1"/>
<evidence type="ECO:0000255" key="2">
    <source>
        <dbReference type="PROSITE-ProRule" id="PRU00326"/>
    </source>
</evidence>
<evidence type="ECO:0000255" key="3">
    <source>
        <dbReference type="PROSITE-ProRule" id="PRU01081"/>
    </source>
</evidence>
<evidence type="ECO:0000256" key="4">
    <source>
        <dbReference type="SAM" id="MobiDB-lite"/>
    </source>
</evidence>
<evidence type="ECO:0000305" key="5"/>
<comment type="function">
    <text>Auxin response factors (ARFs) are transcriptional factors that bind specifically to the DNA sequence 5'-TGTCTC-3' found in the auxin-responsive promoter elements (AuxREs).</text>
</comment>
<comment type="subunit">
    <text evidence="1">Homodimers and heterodimers.</text>
</comment>
<comment type="subcellular location">
    <subcellularLocation>
        <location evidence="2">Nucleus</location>
    </subcellularLocation>
</comment>
<comment type="domain">
    <text>Interactions between auxin response factors (ARFs) and Aux/IAA proteins occur through their C-terminal dimerization domains III and IV.</text>
</comment>
<comment type="similarity">
    <text evidence="5">Belongs to the ARF family.</text>
</comment>
<comment type="sequence caution" evidence="5">
    <conflict type="erroneous gene model prediction">
        <sequence resource="EMBL-CDS" id="CAH66895"/>
    </conflict>
</comment>
<comment type="sequence caution" evidence="5">
    <conflict type="erroneous gene model prediction">
        <sequence resource="EMBL-CDS" id="EAY95938"/>
    </conflict>
</comment>
<sequence length="955" mass="105224">MASSQEKAKTGVLRNAAALLDEMQLMGETQGAKKVINSELWHACAGPLVCLPQRGSLVYYFPQGHSEQVAATTRKIPNSRIPNYPNLPSQLLCQVHNITLHADKDTDEVYAQMTLQPVNSETDVFPIPTLGAYTKSKHPTEYFCKNLTASDTSTHGGFSVPRRAAEKLFPQLDYSMQPPNQELIVRDLHDNMWTFRHIYRGQPKRHLLTTGWSLFVGAKRLKAGDSVLFIRDEKSQLLLGVRRATRQQTMLSSSVLSTDSMHIGVLAAAAHAASSGSSFTIYYNPRTSPSPFVIPVARYNKATYMQPSVGMRFAMMFETEESSKRRYTGTVVGISDYDPMRWPNSKWRNLQVEWDEHGYGERPERVSIWDIETPENTLVFPSSTLNSKRQCLPGYGVSVPGMEIGSANMSSFPRAQGNPYGSLQHIPAVGSELAIMLLNQSGQTLGSPLSFHQSSYSSIIQNVKQNYIPPLTVSTSACLTKQESLPSDDAQHQFHMANMQNGDLEGSEVQPVIDSISESKLNATSRDPRNTDSYTSRSTSEQNSKGEPRGKTRRSKKGLPHKTVSEKSDLSSAPSWICDNQQVGLESKLVGCDEQVNCGNIEDSSGALTQGNFVGQPHGHQVEQKGVLSPPKVESSKSPDGGKSVNSFPNQGCFSQFIDGLDWMTQPSYYQDSNVIQPAGVSENIFSSSADIPPSMIADTMETFQASCLSDCLPNSIQEFISSPDLNSLTFLSPDMQNLEVQLQHDGSNLPSTSNSFVQMSFSEESASQSANLSGLHMESTHRSINTTSCSQPMSTGGFDAGMYSKLPRLKESQILSLPEIHTNSMGTSACSMDATEYSLDRSAKPMKPPVRTYTKVQKQGSVGRSIDVTGFRNYHELRSAIACMFGLQGKLEHPGSSEWKLVYVDYENDVLLVGDDPWEEFINCVRCIRILSPSEVQQMSENGMHVLNDCIQAA</sequence>
<feature type="chain" id="PRO_0000299266" description="Auxin response factor 11">
    <location>
        <begin position="1"/>
        <end position="955"/>
    </location>
</feature>
<feature type="domain" description="PB1" evidence="3">
    <location>
        <begin position="852"/>
        <end position="936"/>
    </location>
</feature>
<feature type="DNA-binding region" description="TF-B3" evidence="2">
    <location>
        <begin position="143"/>
        <end position="245"/>
    </location>
</feature>
<feature type="region of interest" description="Disordered" evidence="4">
    <location>
        <begin position="518"/>
        <end position="573"/>
    </location>
</feature>
<feature type="region of interest" description="Disordered" evidence="4">
    <location>
        <begin position="609"/>
        <end position="646"/>
    </location>
</feature>
<feature type="compositionally biased region" description="Polar residues" evidence="4">
    <location>
        <begin position="518"/>
        <end position="543"/>
    </location>
</feature>
<feature type="compositionally biased region" description="Basic residues" evidence="4">
    <location>
        <begin position="551"/>
        <end position="560"/>
    </location>
</feature>
<keyword id="KW-0927">Auxin signaling pathway</keyword>
<keyword id="KW-0238">DNA-binding</keyword>
<keyword id="KW-0539">Nucleus</keyword>
<keyword id="KW-1185">Reference proteome</keyword>
<keyword id="KW-0804">Transcription</keyword>
<keyword id="KW-0805">Transcription regulation</keyword>
<gene>
    <name type="primary">ARF11</name>
    <name type="synonym">ARF5</name>
    <name type="synonym">MP</name>
    <name type="ORF">OsI_017171</name>
    <name type="ORF">OSIGBa0099L20.10</name>
</gene>
<dbReference type="EMBL" id="CR855152">
    <property type="protein sequence ID" value="CAH66895.1"/>
    <property type="status" value="ALT_SEQ"/>
    <property type="molecule type" value="Genomic_DNA"/>
</dbReference>
<dbReference type="EMBL" id="CM000129">
    <property type="protein sequence ID" value="EAY95938.1"/>
    <property type="status" value="ALT_SEQ"/>
    <property type="molecule type" value="Genomic_DNA"/>
</dbReference>
<dbReference type="SMR" id="Q01K26"/>
<dbReference type="STRING" id="39946.Q01K26"/>
<dbReference type="EnsemblPlants" id="OsGoSa_04g0029480.01">
    <property type="protein sequence ID" value="OsGoSa_04g0029480.01"/>
    <property type="gene ID" value="OsGoSa_04g0029480"/>
</dbReference>
<dbReference type="EnsemblPlants" id="OsIR64_04g0029080.01">
    <property type="protein sequence ID" value="OsIR64_04g0029080.01"/>
    <property type="gene ID" value="OsIR64_04g0029080"/>
</dbReference>
<dbReference type="EnsemblPlants" id="OsKYG_04g0029360.01">
    <property type="protein sequence ID" value="OsKYG_04g0029360.01"/>
    <property type="gene ID" value="OsKYG_04g0029360"/>
</dbReference>
<dbReference type="EnsemblPlants" id="OsLaMu_04g0030040.01">
    <property type="protein sequence ID" value="OsLaMu_04g0030040.01"/>
    <property type="gene ID" value="OsLaMu_04g0030040"/>
</dbReference>
<dbReference type="EnsemblPlants" id="OsLima_04g0029510.01">
    <property type="protein sequence ID" value="OsLima_04g0029510.01"/>
    <property type="gene ID" value="OsLima_04g0029510"/>
</dbReference>
<dbReference type="EnsemblPlants" id="OsLiXu_04g0030030.01">
    <property type="protein sequence ID" value="OsLiXu_04g0030030.01"/>
    <property type="gene ID" value="OsLiXu_04g0030030"/>
</dbReference>
<dbReference type="EnsemblPlants" id="OsMH63_04G030430_01">
    <property type="protein sequence ID" value="OsMH63_04G030430_01"/>
    <property type="gene ID" value="OsMH63_04G030430"/>
</dbReference>
<dbReference type="EnsemblPlants" id="OsPr106_04g0030430.01">
    <property type="protein sequence ID" value="OsPr106_04g0030430.01"/>
    <property type="gene ID" value="OsPr106_04g0030430"/>
</dbReference>
<dbReference type="EnsemblPlants" id="OsZS97_04G030550_01">
    <property type="protein sequence ID" value="OsZS97_04G030550_01"/>
    <property type="gene ID" value="OsZS97_04G030550"/>
</dbReference>
<dbReference type="Gramene" id="OsGoSa_04g0029480.01">
    <property type="protein sequence ID" value="OsGoSa_04g0029480.01"/>
    <property type="gene ID" value="OsGoSa_04g0029480"/>
</dbReference>
<dbReference type="Gramene" id="OsIR64_04g0029080.01">
    <property type="protein sequence ID" value="OsIR64_04g0029080.01"/>
    <property type="gene ID" value="OsIR64_04g0029080"/>
</dbReference>
<dbReference type="Gramene" id="OsKYG_04g0029360.01">
    <property type="protein sequence ID" value="OsKYG_04g0029360.01"/>
    <property type="gene ID" value="OsKYG_04g0029360"/>
</dbReference>
<dbReference type="Gramene" id="OsLaMu_04g0030040.01">
    <property type="protein sequence ID" value="OsLaMu_04g0030040.01"/>
    <property type="gene ID" value="OsLaMu_04g0030040"/>
</dbReference>
<dbReference type="Gramene" id="OsLima_04g0029510.01">
    <property type="protein sequence ID" value="OsLima_04g0029510.01"/>
    <property type="gene ID" value="OsLima_04g0029510"/>
</dbReference>
<dbReference type="Gramene" id="OsLiXu_04g0030030.01">
    <property type="protein sequence ID" value="OsLiXu_04g0030030.01"/>
    <property type="gene ID" value="OsLiXu_04g0030030"/>
</dbReference>
<dbReference type="Gramene" id="OsMH63_04G030430_01">
    <property type="protein sequence ID" value="OsMH63_04G030430_01"/>
    <property type="gene ID" value="OsMH63_04G030430"/>
</dbReference>
<dbReference type="Gramene" id="OsPr106_04g0030430.01">
    <property type="protein sequence ID" value="OsPr106_04g0030430.01"/>
    <property type="gene ID" value="OsPr106_04g0030430"/>
</dbReference>
<dbReference type="Gramene" id="OsZS97_04G030550_01">
    <property type="protein sequence ID" value="OsZS97_04G030550_01"/>
    <property type="gene ID" value="OsZS97_04G030550"/>
</dbReference>
<dbReference type="OrthoDB" id="2016915at2759"/>
<dbReference type="Proteomes" id="UP000007015">
    <property type="component" value="Chromosome 4"/>
</dbReference>
<dbReference type="GO" id="GO:0005634">
    <property type="term" value="C:nucleus"/>
    <property type="evidence" value="ECO:0007669"/>
    <property type="project" value="UniProtKB-SubCell"/>
</dbReference>
<dbReference type="GO" id="GO:0003677">
    <property type="term" value="F:DNA binding"/>
    <property type="evidence" value="ECO:0007669"/>
    <property type="project" value="UniProtKB-KW"/>
</dbReference>
<dbReference type="GO" id="GO:0009734">
    <property type="term" value="P:auxin-activated signaling pathway"/>
    <property type="evidence" value="ECO:0007669"/>
    <property type="project" value="UniProtKB-KW"/>
</dbReference>
<dbReference type="GO" id="GO:0006355">
    <property type="term" value="P:regulation of DNA-templated transcription"/>
    <property type="evidence" value="ECO:0007669"/>
    <property type="project" value="InterPro"/>
</dbReference>
<dbReference type="CDD" id="cd10017">
    <property type="entry name" value="B3_DNA"/>
    <property type="match status" value="1"/>
</dbReference>
<dbReference type="FunFam" id="2.30.30.1040:FF:000001">
    <property type="entry name" value="Auxin response factor"/>
    <property type="match status" value="1"/>
</dbReference>
<dbReference type="FunFam" id="2.40.330.10:FF:000001">
    <property type="entry name" value="Auxin response factor"/>
    <property type="match status" value="1"/>
</dbReference>
<dbReference type="FunFam" id="3.10.20.90:FF:000047">
    <property type="entry name" value="Auxin response factor"/>
    <property type="match status" value="1"/>
</dbReference>
<dbReference type="Gene3D" id="2.30.30.1040">
    <property type="match status" value="1"/>
</dbReference>
<dbReference type="Gene3D" id="2.40.330.10">
    <property type="entry name" value="DNA-binding pseudobarrel domain"/>
    <property type="match status" value="1"/>
</dbReference>
<dbReference type="Gene3D" id="3.10.20.90">
    <property type="entry name" value="Phosphatidylinositol 3-kinase Catalytic Subunit, Chain A, domain 1"/>
    <property type="match status" value="1"/>
</dbReference>
<dbReference type="InterPro" id="IPR010525">
    <property type="entry name" value="ARF_dom"/>
</dbReference>
<dbReference type="InterPro" id="IPR044835">
    <property type="entry name" value="ARF_plant"/>
</dbReference>
<dbReference type="InterPro" id="IPR033389">
    <property type="entry name" value="AUX/IAA_dom"/>
</dbReference>
<dbReference type="InterPro" id="IPR003340">
    <property type="entry name" value="B3_DNA-bd"/>
</dbReference>
<dbReference type="InterPro" id="IPR015300">
    <property type="entry name" value="DNA-bd_pseudobarrel_sf"/>
</dbReference>
<dbReference type="InterPro" id="IPR053793">
    <property type="entry name" value="PB1-like"/>
</dbReference>
<dbReference type="PANTHER" id="PTHR31384">
    <property type="entry name" value="AUXIN RESPONSE FACTOR 4-RELATED"/>
    <property type="match status" value="1"/>
</dbReference>
<dbReference type="PANTHER" id="PTHR31384:SF10">
    <property type="entry name" value="AUXIN RESPONSE FACTOR 5"/>
    <property type="match status" value="1"/>
</dbReference>
<dbReference type="Pfam" id="PF06507">
    <property type="entry name" value="ARF_AD"/>
    <property type="match status" value="1"/>
</dbReference>
<dbReference type="Pfam" id="PF02309">
    <property type="entry name" value="AUX_IAA"/>
    <property type="match status" value="1"/>
</dbReference>
<dbReference type="Pfam" id="PF02362">
    <property type="entry name" value="B3"/>
    <property type="match status" value="1"/>
</dbReference>
<dbReference type="SMART" id="SM01019">
    <property type="entry name" value="B3"/>
    <property type="match status" value="1"/>
</dbReference>
<dbReference type="SUPFAM" id="SSF54277">
    <property type="entry name" value="CAD &amp; PB1 domains"/>
    <property type="match status" value="1"/>
</dbReference>
<dbReference type="SUPFAM" id="SSF101936">
    <property type="entry name" value="DNA-binding pseudobarrel domain"/>
    <property type="match status" value="1"/>
</dbReference>
<dbReference type="PROSITE" id="PS50863">
    <property type="entry name" value="B3"/>
    <property type="match status" value="1"/>
</dbReference>
<dbReference type="PROSITE" id="PS51745">
    <property type="entry name" value="PB1"/>
    <property type="match status" value="1"/>
</dbReference>
<proteinExistence type="inferred from homology"/>
<reference key="1">
    <citation type="journal article" date="2002" name="Nature">
        <title>Sequence and analysis of rice chromosome 4.</title>
        <authorList>
            <person name="Feng Q."/>
            <person name="Zhang Y."/>
            <person name="Hao P."/>
            <person name="Wang S."/>
            <person name="Fu G."/>
            <person name="Huang Y."/>
            <person name="Li Y."/>
            <person name="Zhu J."/>
            <person name="Liu Y."/>
            <person name="Hu X."/>
            <person name="Jia P."/>
            <person name="Zhang Y."/>
            <person name="Zhao Q."/>
            <person name="Ying K."/>
            <person name="Yu S."/>
            <person name="Tang Y."/>
            <person name="Weng Q."/>
            <person name="Zhang L."/>
            <person name="Lu Y."/>
            <person name="Mu J."/>
            <person name="Lu Y."/>
            <person name="Zhang L.S."/>
            <person name="Yu Z."/>
            <person name="Fan D."/>
            <person name="Liu X."/>
            <person name="Lu T."/>
            <person name="Li C."/>
            <person name="Wu Y."/>
            <person name="Sun T."/>
            <person name="Lei H."/>
            <person name="Li T."/>
            <person name="Hu H."/>
            <person name="Guan J."/>
            <person name="Wu M."/>
            <person name="Zhang R."/>
            <person name="Zhou B."/>
            <person name="Chen Z."/>
            <person name="Chen L."/>
            <person name="Jin Z."/>
            <person name="Wang R."/>
            <person name="Yin H."/>
            <person name="Cai Z."/>
            <person name="Ren S."/>
            <person name="Lv G."/>
            <person name="Gu W."/>
            <person name="Zhu G."/>
            <person name="Tu Y."/>
            <person name="Jia J."/>
            <person name="Zhang Y."/>
            <person name="Chen J."/>
            <person name="Kang H."/>
            <person name="Chen X."/>
            <person name="Shao C."/>
            <person name="Sun Y."/>
            <person name="Hu Q."/>
            <person name="Zhang X."/>
            <person name="Zhang W."/>
            <person name="Wang L."/>
            <person name="Ding C."/>
            <person name="Sheng H."/>
            <person name="Gu J."/>
            <person name="Chen S."/>
            <person name="Ni L."/>
            <person name="Zhu F."/>
            <person name="Chen W."/>
            <person name="Lan L."/>
            <person name="Lai Y."/>
            <person name="Cheng Z."/>
            <person name="Gu M."/>
            <person name="Jiang J."/>
            <person name="Li J."/>
            <person name="Hong G."/>
            <person name="Xue Y."/>
            <person name="Han B."/>
        </authorList>
    </citation>
    <scope>NUCLEOTIDE SEQUENCE [LARGE SCALE GENOMIC DNA]</scope>
    <source>
        <strain>cv. Guang-Lu-Ai No.4</strain>
    </source>
</reference>
<reference key="2">
    <citation type="journal article" date="2005" name="PLoS Biol.">
        <title>The genomes of Oryza sativa: a history of duplications.</title>
        <authorList>
            <person name="Yu J."/>
            <person name="Wang J."/>
            <person name="Lin W."/>
            <person name="Li S."/>
            <person name="Li H."/>
            <person name="Zhou J."/>
            <person name="Ni P."/>
            <person name="Dong W."/>
            <person name="Hu S."/>
            <person name="Zeng C."/>
            <person name="Zhang J."/>
            <person name="Zhang Y."/>
            <person name="Li R."/>
            <person name="Xu Z."/>
            <person name="Li S."/>
            <person name="Li X."/>
            <person name="Zheng H."/>
            <person name="Cong L."/>
            <person name="Lin L."/>
            <person name="Yin J."/>
            <person name="Geng J."/>
            <person name="Li G."/>
            <person name="Shi J."/>
            <person name="Liu J."/>
            <person name="Lv H."/>
            <person name="Li J."/>
            <person name="Wang J."/>
            <person name="Deng Y."/>
            <person name="Ran L."/>
            <person name="Shi X."/>
            <person name="Wang X."/>
            <person name="Wu Q."/>
            <person name="Li C."/>
            <person name="Ren X."/>
            <person name="Wang J."/>
            <person name="Wang X."/>
            <person name="Li D."/>
            <person name="Liu D."/>
            <person name="Zhang X."/>
            <person name="Ji Z."/>
            <person name="Zhao W."/>
            <person name="Sun Y."/>
            <person name="Zhang Z."/>
            <person name="Bao J."/>
            <person name="Han Y."/>
            <person name="Dong L."/>
            <person name="Ji J."/>
            <person name="Chen P."/>
            <person name="Wu S."/>
            <person name="Liu J."/>
            <person name="Xiao Y."/>
            <person name="Bu D."/>
            <person name="Tan J."/>
            <person name="Yang L."/>
            <person name="Ye C."/>
            <person name="Zhang J."/>
            <person name="Xu J."/>
            <person name="Zhou Y."/>
            <person name="Yu Y."/>
            <person name="Zhang B."/>
            <person name="Zhuang S."/>
            <person name="Wei H."/>
            <person name="Liu B."/>
            <person name="Lei M."/>
            <person name="Yu H."/>
            <person name="Li Y."/>
            <person name="Xu H."/>
            <person name="Wei S."/>
            <person name="He X."/>
            <person name="Fang L."/>
            <person name="Zhang Z."/>
            <person name="Zhang Y."/>
            <person name="Huang X."/>
            <person name="Su Z."/>
            <person name="Tong W."/>
            <person name="Li J."/>
            <person name="Tong Z."/>
            <person name="Li S."/>
            <person name="Ye J."/>
            <person name="Wang L."/>
            <person name="Fang L."/>
            <person name="Lei T."/>
            <person name="Chen C.-S."/>
            <person name="Chen H.-C."/>
            <person name="Xu Z."/>
            <person name="Li H."/>
            <person name="Huang H."/>
            <person name="Zhang F."/>
            <person name="Xu H."/>
            <person name="Li N."/>
            <person name="Zhao C."/>
            <person name="Li S."/>
            <person name="Dong L."/>
            <person name="Huang Y."/>
            <person name="Li L."/>
            <person name="Xi Y."/>
            <person name="Qi Q."/>
            <person name="Li W."/>
            <person name="Zhang B."/>
            <person name="Hu W."/>
            <person name="Zhang Y."/>
            <person name="Tian X."/>
            <person name="Jiao Y."/>
            <person name="Liang X."/>
            <person name="Jin J."/>
            <person name="Gao L."/>
            <person name="Zheng W."/>
            <person name="Hao B."/>
            <person name="Liu S.-M."/>
            <person name="Wang W."/>
            <person name="Yuan L."/>
            <person name="Cao M."/>
            <person name="McDermott J."/>
            <person name="Samudrala R."/>
            <person name="Wang J."/>
            <person name="Wong G.K.-S."/>
            <person name="Yang H."/>
        </authorList>
    </citation>
    <scope>NUCLEOTIDE SEQUENCE [LARGE SCALE GENOMIC DNA]</scope>
    <source>
        <strain>cv. 93-11</strain>
    </source>
</reference>
<reference key="3">
    <citation type="journal article" date="2007" name="Gene">
        <title>Genome-wide analysis of the auxin response factors (ARF) gene family in rice (Oryza sativa).</title>
        <authorList>
            <person name="Wang D."/>
            <person name="Pei K."/>
            <person name="Fu Y."/>
            <person name="Sun Z."/>
            <person name="Li S."/>
            <person name="Liu H."/>
            <person name="Tang K."/>
            <person name="Han B."/>
            <person name="Tao Y."/>
        </authorList>
    </citation>
    <scope>GENE FAMILY</scope>
    <scope>NOMENCLATURE</scope>
</reference>
<organism>
    <name type="scientific">Oryza sativa subsp. indica</name>
    <name type="common">Rice</name>
    <dbReference type="NCBI Taxonomy" id="39946"/>
    <lineage>
        <taxon>Eukaryota</taxon>
        <taxon>Viridiplantae</taxon>
        <taxon>Streptophyta</taxon>
        <taxon>Embryophyta</taxon>
        <taxon>Tracheophyta</taxon>
        <taxon>Spermatophyta</taxon>
        <taxon>Magnoliopsida</taxon>
        <taxon>Liliopsida</taxon>
        <taxon>Poales</taxon>
        <taxon>Poaceae</taxon>
        <taxon>BOP clade</taxon>
        <taxon>Oryzoideae</taxon>
        <taxon>Oryzeae</taxon>
        <taxon>Oryzinae</taxon>
        <taxon>Oryza</taxon>
        <taxon>Oryza sativa</taxon>
    </lineage>
</organism>
<accession>Q01K26</accession>
<accession>A2XYM8</accession>